<proteinExistence type="inferred from homology"/>
<reference key="1">
    <citation type="journal article" date="2007" name="J. Bacteriol.">
        <title>Genome-wide transcriptional changes in Streptococcus gordonii in response to competence signaling peptide.</title>
        <authorList>
            <person name="Vickerman M.M."/>
            <person name="Iobst S."/>
            <person name="Jesionowski A.M."/>
            <person name="Gill S.R."/>
        </authorList>
    </citation>
    <scope>NUCLEOTIDE SEQUENCE [LARGE SCALE GENOMIC DNA]</scope>
    <source>
        <strain>Challis / ATCC 35105 / BCRC 15272 / CH1 / DL1 / V288</strain>
    </source>
</reference>
<organism>
    <name type="scientific">Streptococcus gordonii (strain Challis / ATCC 35105 / BCRC 15272 / CH1 / DL1 / V288)</name>
    <dbReference type="NCBI Taxonomy" id="467705"/>
    <lineage>
        <taxon>Bacteria</taxon>
        <taxon>Bacillati</taxon>
        <taxon>Bacillota</taxon>
        <taxon>Bacilli</taxon>
        <taxon>Lactobacillales</taxon>
        <taxon>Streptococcaceae</taxon>
        <taxon>Streptococcus</taxon>
    </lineage>
</organism>
<evidence type="ECO:0000255" key="1">
    <source>
        <dbReference type="HAMAP-Rule" id="MF_00139"/>
    </source>
</evidence>
<evidence type="ECO:0000255" key="2">
    <source>
        <dbReference type="PROSITE-ProRule" id="PRU01202"/>
    </source>
</evidence>
<gene>
    <name evidence="1" type="primary">purH</name>
    <name type="ordered locus">SGO_0040</name>
</gene>
<dbReference type="EC" id="2.1.2.3" evidence="1"/>
<dbReference type="EC" id="3.5.4.10" evidence="1"/>
<dbReference type="EMBL" id="CP000725">
    <property type="protein sequence ID" value="ABV10508.1"/>
    <property type="molecule type" value="Genomic_DNA"/>
</dbReference>
<dbReference type="RefSeq" id="WP_011999592.1">
    <property type="nucleotide sequence ID" value="NC_009785.1"/>
</dbReference>
<dbReference type="SMR" id="A8AUA2"/>
<dbReference type="STRING" id="467705.SGO_0040"/>
<dbReference type="KEGG" id="sgo:SGO_0040"/>
<dbReference type="eggNOG" id="COG0138">
    <property type="taxonomic scope" value="Bacteria"/>
</dbReference>
<dbReference type="HOGENOM" id="CLU_016316_5_2_9"/>
<dbReference type="UniPathway" id="UPA00074">
    <property type="reaction ID" value="UER00133"/>
</dbReference>
<dbReference type="UniPathway" id="UPA00074">
    <property type="reaction ID" value="UER00135"/>
</dbReference>
<dbReference type="Proteomes" id="UP000001131">
    <property type="component" value="Chromosome"/>
</dbReference>
<dbReference type="GO" id="GO:0005829">
    <property type="term" value="C:cytosol"/>
    <property type="evidence" value="ECO:0007669"/>
    <property type="project" value="TreeGrafter"/>
</dbReference>
<dbReference type="GO" id="GO:0003937">
    <property type="term" value="F:IMP cyclohydrolase activity"/>
    <property type="evidence" value="ECO:0007669"/>
    <property type="project" value="UniProtKB-UniRule"/>
</dbReference>
<dbReference type="GO" id="GO:0004643">
    <property type="term" value="F:phosphoribosylaminoimidazolecarboxamide formyltransferase activity"/>
    <property type="evidence" value="ECO:0007669"/>
    <property type="project" value="UniProtKB-UniRule"/>
</dbReference>
<dbReference type="GO" id="GO:0006189">
    <property type="term" value="P:'de novo' IMP biosynthetic process"/>
    <property type="evidence" value="ECO:0007669"/>
    <property type="project" value="UniProtKB-UniRule"/>
</dbReference>
<dbReference type="CDD" id="cd01421">
    <property type="entry name" value="IMPCH"/>
    <property type="match status" value="1"/>
</dbReference>
<dbReference type="FunFam" id="3.40.140.20:FF:000001">
    <property type="entry name" value="Bifunctional purine biosynthesis protein PurH"/>
    <property type="match status" value="1"/>
</dbReference>
<dbReference type="FunFam" id="3.40.140.20:FF:000002">
    <property type="entry name" value="Bifunctional purine biosynthesis protein PurH"/>
    <property type="match status" value="1"/>
</dbReference>
<dbReference type="FunFam" id="3.40.50.1380:FF:000001">
    <property type="entry name" value="Bifunctional purine biosynthesis protein PurH"/>
    <property type="match status" value="1"/>
</dbReference>
<dbReference type="Gene3D" id="3.40.140.20">
    <property type="match status" value="2"/>
</dbReference>
<dbReference type="Gene3D" id="3.40.50.1380">
    <property type="entry name" value="Methylglyoxal synthase-like domain"/>
    <property type="match status" value="1"/>
</dbReference>
<dbReference type="HAMAP" id="MF_00139">
    <property type="entry name" value="PurH"/>
    <property type="match status" value="1"/>
</dbReference>
<dbReference type="InterPro" id="IPR024051">
    <property type="entry name" value="AICAR_Tfase_dup_dom_sf"/>
</dbReference>
<dbReference type="InterPro" id="IPR016193">
    <property type="entry name" value="Cytidine_deaminase-like"/>
</dbReference>
<dbReference type="InterPro" id="IPR011607">
    <property type="entry name" value="MGS-like_dom"/>
</dbReference>
<dbReference type="InterPro" id="IPR036914">
    <property type="entry name" value="MGS-like_dom_sf"/>
</dbReference>
<dbReference type="InterPro" id="IPR002695">
    <property type="entry name" value="PurH-like"/>
</dbReference>
<dbReference type="NCBIfam" id="NF002049">
    <property type="entry name" value="PRK00881.1"/>
    <property type="match status" value="1"/>
</dbReference>
<dbReference type="NCBIfam" id="TIGR00355">
    <property type="entry name" value="purH"/>
    <property type="match status" value="1"/>
</dbReference>
<dbReference type="PANTHER" id="PTHR11692:SF0">
    <property type="entry name" value="BIFUNCTIONAL PURINE BIOSYNTHESIS PROTEIN ATIC"/>
    <property type="match status" value="1"/>
</dbReference>
<dbReference type="PANTHER" id="PTHR11692">
    <property type="entry name" value="BIFUNCTIONAL PURINE BIOSYNTHESIS PROTEIN PURH"/>
    <property type="match status" value="1"/>
</dbReference>
<dbReference type="Pfam" id="PF01808">
    <property type="entry name" value="AICARFT_IMPCHas"/>
    <property type="match status" value="1"/>
</dbReference>
<dbReference type="Pfam" id="PF02142">
    <property type="entry name" value="MGS"/>
    <property type="match status" value="1"/>
</dbReference>
<dbReference type="PIRSF" id="PIRSF000414">
    <property type="entry name" value="AICARFT_IMPCHas"/>
    <property type="match status" value="1"/>
</dbReference>
<dbReference type="SMART" id="SM00798">
    <property type="entry name" value="AICARFT_IMPCHas"/>
    <property type="match status" value="1"/>
</dbReference>
<dbReference type="SMART" id="SM00851">
    <property type="entry name" value="MGS"/>
    <property type="match status" value="1"/>
</dbReference>
<dbReference type="SUPFAM" id="SSF53927">
    <property type="entry name" value="Cytidine deaminase-like"/>
    <property type="match status" value="1"/>
</dbReference>
<dbReference type="SUPFAM" id="SSF52335">
    <property type="entry name" value="Methylglyoxal synthase-like"/>
    <property type="match status" value="1"/>
</dbReference>
<dbReference type="PROSITE" id="PS51855">
    <property type="entry name" value="MGS"/>
    <property type="match status" value="1"/>
</dbReference>
<name>PUR9_STRGC</name>
<comment type="catalytic activity">
    <reaction evidence="1">
        <text>(6R)-10-formyltetrahydrofolate + 5-amino-1-(5-phospho-beta-D-ribosyl)imidazole-4-carboxamide = 5-formamido-1-(5-phospho-D-ribosyl)imidazole-4-carboxamide + (6S)-5,6,7,8-tetrahydrofolate</text>
        <dbReference type="Rhea" id="RHEA:22192"/>
        <dbReference type="ChEBI" id="CHEBI:57453"/>
        <dbReference type="ChEBI" id="CHEBI:58467"/>
        <dbReference type="ChEBI" id="CHEBI:58475"/>
        <dbReference type="ChEBI" id="CHEBI:195366"/>
        <dbReference type="EC" id="2.1.2.3"/>
    </reaction>
</comment>
<comment type="catalytic activity">
    <reaction evidence="1">
        <text>IMP + H2O = 5-formamido-1-(5-phospho-D-ribosyl)imidazole-4-carboxamide</text>
        <dbReference type="Rhea" id="RHEA:18445"/>
        <dbReference type="ChEBI" id="CHEBI:15377"/>
        <dbReference type="ChEBI" id="CHEBI:58053"/>
        <dbReference type="ChEBI" id="CHEBI:58467"/>
        <dbReference type="EC" id="3.5.4.10"/>
    </reaction>
</comment>
<comment type="pathway">
    <text evidence="1">Purine metabolism; IMP biosynthesis via de novo pathway; 5-formamido-1-(5-phospho-D-ribosyl)imidazole-4-carboxamide from 5-amino-1-(5-phospho-D-ribosyl)imidazole-4-carboxamide (10-formyl THF route): step 1/1.</text>
</comment>
<comment type="pathway">
    <text evidence="1">Purine metabolism; IMP biosynthesis via de novo pathway; IMP from 5-formamido-1-(5-phospho-D-ribosyl)imidazole-4-carboxamide: step 1/1.</text>
</comment>
<comment type="domain">
    <text evidence="1">The IMP cyclohydrolase activity resides in the N-terminal region.</text>
</comment>
<comment type="similarity">
    <text evidence="1">Belongs to the PurH family.</text>
</comment>
<sequence>MTKRALISVSDKAGIVEFAQELKKLGWEIISTGGTKVALDSAGVETIAIDDVTGFPEMMDGRVKTLHPNIHGGLLARRDLDSHLEAAKDNNIELIDLVVVNLYPFKETILKPDVTYADAVENIDIGGPSMLRSAAKNHASVTVVVDPADYAVVLDELSANGETTYETRQRLAAKVFRHTAAYDALIAEYFTAQVGESKPEKLTLTYDLKQAMRYGENPQQDADFYQKALPTDYSIASAKQLNGKELSFNNIRDADAAIRIIRDFKYRPTVVALKHMNPCGIGQADDIKTAWDYAYESDPVSIFGGIVVLNREVDAATAEKMHGVFLEIIIAPSYTDEALAILTNKKKNLRILALPFDAQEASEVEAEYTGVVGGLLVQNQDVVKESPADWQVVTKRQPTETEATALEFAWKAIKYVKSNGIIVTNDHMTLGVGPGQTNRVASVRIAIDQAKDRLDGAVLASDAFFPFADNVEEIAKAGIKAIIQPGGSVRDQESIEAADKYGLTMVFTGVRHFRH</sequence>
<protein>
    <recommendedName>
        <fullName evidence="1">Bifunctional purine biosynthesis protein PurH</fullName>
    </recommendedName>
    <domain>
        <recommendedName>
            <fullName evidence="1">Phosphoribosylaminoimidazolecarboxamide formyltransferase</fullName>
            <ecNumber evidence="1">2.1.2.3</ecNumber>
        </recommendedName>
        <alternativeName>
            <fullName evidence="1">AICAR transformylase</fullName>
        </alternativeName>
    </domain>
    <domain>
        <recommendedName>
            <fullName evidence="1">IMP cyclohydrolase</fullName>
            <ecNumber evidence="1">3.5.4.10</ecNumber>
        </recommendedName>
        <alternativeName>
            <fullName evidence="1">ATIC</fullName>
        </alternativeName>
        <alternativeName>
            <fullName evidence="1">IMP synthase</fullName>
        </alternativeName>
        <alternativeName>
            <fullName evidence="1">Inosinicase</fullName>
        </alternativeName>
    </domain>
</protein>
<accession>A8AUA2</accession>
<feature type="chain" id="PRO_1000076499" description="Bifunctional purine biosynthesis protein PurH">
    <location>
        <begin position="1"/>
        <end position="515"/>
    </location>
</feature>
<feature type="domain" description="MGS-like" evidence="2">
    <location>
        <begin position="1"/>
        <end position="145"/>
    </location>
</feature>
<keyword id="KW-0378">Hydrolase</keyword>
<keyword id="KW-0511">Multifunctional enzyme</keyword>
<keyword id="KW-0658">Purine biosynthesis</keyword>
<keyword id="KW-1185">Reference proteome</keyword>
<keyword id="KW-0808">Transferase</keyword>